<reference key="1">
    <citation type="journal article" date="2005" name="Genome Biol.">
        <title>Full-length cDNAs from chicken bursal lymphocytes to facilitate gene function analysis.</title>
        <authorList>
            <person name="Caldwell R.B."/>
            <person name="Kierzek A.M."/>
            <person name="Arakawa H."/>
            <person name="Bezzubov Y."/>
            <person name="Zaim J."/>
            <person name="Fiedler P."/>
            <person name="Kutter S."/>
            <person name="Blagodatski A."/>
            <person name="Kostovska D."/>
            <person name="Koter M."/>
            <person name="Plachy J."/>
            <person name="Carninci P."/>
            <person name="Hayashizaki Y."/>
            <person name="Buerstedde J.-M."/>
        </authorList>
    </citation>
    <scope>NUCLEOTIDE SEQUENCE [LARGE SCALE MRNA]</scope>
    <source>
        <strain>CB</strain>
        <tissue>Bursa of Fabricius</tissue>
    </source>
</reference>
<keyword id="KW-0963">Cytoplasm</keyword>
<keyword id="KW-1185">Reference proteome</keyword>
<keyword id="KW-0810">Translation regulation</keyword>
<evidence type="ECO:0000250" key="1">
    <source>
        <dbReference type="UniProtKB" id="Q9Y6E2"/>
    </source>
</evidence>
<evidence type="ECO:0000255" key="2">
    <source>
        <dbReference type="PROSITE-ProRule" id="PRU00695"/>
    </source>
</evidence>
<evidence type="ECO:0000256" key="3">
    <source>
        <dbReference type="SAM" id="MobiDB-lite"/>
    </source>
</evidence>
<evidence type="ECO:0000305" key="4"/>
<feature type="chain" id="PRO_0000254623" description="eIF5-mimic protein 1">
    <location>
        <begin position="1"/>
        <end position="414"/>
    </location>
</feature>
<feature type="domain" description="W2" evidence="2">
    <location>
        <begin position="248"/>
        <end position="414"/>
    </location>
</feature>
<feature type="region of interest" description="Disordered" evidence="3">
    <location>
        <begin position="1"/>
        <end position="22"/>
    </location>
</feature>
<accession>Q5ZL42</accession>
<organism>
    <name type="scientific">Gallus gallus</name>
    <name type="common">Chicken</name>
    <dbReference type="NCBI Taxonomy" id="9031"/>
    <lineage>
        <taxon>Eukaryota</taxon>
        <taxon>Metazoa</taxon>
        <taxon>Chordata</taxon>
        <taxon>Craniata</taxon>
        <taxon>Vertebrata</taxon>
        <taxon>Euteleostomi</taxon>
        <taxon>Archelosauria</taxon>
        <taxon>Archosauria</taxon>
        <taxon>Dinosauria</taxon>
        <taxon>Saurischia</taxon>
        <taxon>Theropoda</taxon>
        <taxon>Coelurosauria</taxon>
        <taxon>Aves</taxon>
        <taxon>Neognathae</taxon>
        <taxon>Galloanserae</taxon>
        <taxon>Galliformes</taxon>
        <taxon>Phasianidae</taxon>
        <taxon>Phasianinae</taxon>
        <taxon>Gallus</taxon>
    </lineage>
</organism>
<name>5MP1_CHICK</name>
<dbReference type="EMBL" id="AJ719892">
    <property type="protein sequence ID" value="CAG31551.1"/>
    <property type="molecule type" value="mRNA"/>
</dbReference>
<dbReference type="RefSeq" id="NP_001006358.2">
    <property type="nucleotide sequence ID" value="NM_001006358.2"/>
</dbReference>
<dbReference type="BioGRID" id="681535">
    <property type="interactions" value="1"/>
</dbReference>
<dbReference type="FunCoup" id="Q5ZL42">
    <property type="interactions" value="1289"/>
</dbReference>
<dbReference type="STRING" id="9031.ENSGALP00000052296"/>
<dbReference type="PaxDb" id="9031-ENSGALP00000017553"/>
<dbReference type="GeneID" id="420594"/>
<dbReference type="KEGG" id="gga:420594"/>
<dbReference type="CTD" id="28969"/>
<dbReference type="VEuPathDB" id="HostDB:geneid_420594"/>
<dbReference type="eggNOG" id="KOG2297">
    <property type="taxonomic scope" value="Eukaryota"/>
</dbReference>
<dbReference type="InParanoid" id="Q5ZL42"/>
<dbReference type="OrthoDB" id="1727522at2759"/>
<dbReference type="PhylomeDB" id="Q5ZL42"/>
<dbReference type="PRO" id="PR:Q5ZL42"/>
<dbReference type="Proteomes" id="UP000000539">
    <property type="component" value="Unassembled WGS sequence"/>
</dbReference>
<dbReference type="GO" id="GO:0005737">
    <property type="term" value="C:cytoplasm"/>
    <property type="evidence" value="ECO:0000250"/>
    <property type="project" value="UniProtKB"/>
</dbReference>
<dbReference type="GO" id="GO:0006446">
    <property type="term" value="P:regulation of translational initiation"/>
    <property type="evidence" value="ECO:0000250"/>
    <property type="project" value="UniProtKB"/>
</dbReference>
<dbReference type="CDD" id="cd11560">
    <property type="entry name" value="W2_eIF5C_like"/>
    <property type="match status" value="1"/>
</dbReference>
<dbReference type="FunFam" id="1.25.40.180:FF:000006">
    <property type="entry name" value="Basic leucine zipper and W2 domain-containing protein 1"/>
    <property type="match status" value="1"/>
</dbReference>
<dbReference type="Gene3D" id="1.25.40.180">
    <property type="match status" value="1"/>
</dbReference>
<dbReference type="InterPro" id="IPR016024">
    <property type="entry name" value="ARM-type_fold"/>
</dbReference>
<dbReference type="InterPro" id="IPR051245">
    <property type="entry name" value="eIF5-mimic_regulator"/>
</dbReference>
<dbReference type="InterPro" id="IPR043510">
    <property type="entry name" value="W2_BZW1/2"/>
</dbReference>
<dbReference type="InterPro" id="IPR003307">
    <property type="entry name" value="W2_domain"/>
</dbReference>
<dbReference type="PANTHER" id="PTHR14208">
    <property type="entry name" value="BASIC LEUCINE ZIPPER AND W2 DOMAIN-CONTAINING PROTEIN"/>
    <property type="match status" value="1"/>
</dbReference>
<dbReference type="PANTHER" id="PTHR14208:SF7">
    <property type="entry name" value="EIF5-MIMIC PROTEIN 1"/>
    <property type="match status" value="1"/>
</dbReference>
<dbReference type="Pfam" id="PF25504">
    <property type="entry name" value="HEAT_5MP1_2"/>
    <property type="match status" value="1"/>
</dbReference>
<dbReference type="Pfam" id="PF02020">
    <property type="entry name" value="W2"/>
    <property type="match status" value="1"/>
</dbReference>
<dbReference type="SMART" id="SM00515">
    <property type="entry name" value="eIF5C"/>
    <property type="match status" value="1"/>
</dbReference>
<dbReference type="SUPFAM" id="SSF48371">
    <property type="entry name" value="ARM repeat"/>
    <property type="match status" value="1"/>
</dbReference>
<dbReference type="PROSITE" id="PS51363">
    <property type="entry name" value="W2"/>
    <property type="match status" value="1"/>
</dbReference>
<sequence length="414" mass="47842">MNKNQKPVLTGQRFKTRKRDEKEKFEPTVFRDTIVQGLNEAGSDLEAIAKFLDSAGSRLDYRRYADTLFDILVAGSMLAPGGTRIDDNDKTKMTRHCVFFAEEDHDAIRNYAQVFNKLIRRYKYLEKAFEDEIKKLLLFLKAFSETEQTKLAMLSGILLANGTLPATILTSLFTDNIVKEGIAASFAVKLFKAWMAEKDANSVTSALRKANLDKRLLELFPANRQNVDHFAKYFTEAGLKELSDFLRVQQSLGTRKELQKELQERLSQECPIKEMVLYVKEEMKRNELPEPAVIGLLWTCVMNAVEWNKKEELVAEQALKHLKQYAPLLAVFSTQGQSELILLQKVQEYCYDNIHFMKAFQKIVVLFYKADVLSEEAILKWYKEAHVAKGKSVFLDQMKKFVEWLQNAEEEFRI</sequence>
<gene>
    <name type="primary">BZW2</name>
    <name evidence="1" type="synonym">5MP1</name>
    <name type="ORF">RCJMB04_7o12</name>
</gene>
<comment type="function">
    <text evidence="1">Translation initiation regulator which may repress non-AUG initiated translation and repeat-associated non-AUG (RAN) initiated translation by acting as a competitive inhibitor of eukaryotic translation initiation factor 5 (EIF5) function.</text>
</comment>
<comment type="subcellular location">
    <subcellularLocation>
        <location evidence="1">Cytoplasm</location>
    </subcellularLocation>
</comment>
<comment type="similarity">
    <text evidence="4">Belongs to the BZW family.</text>
</comment>
<proteinExistence type="evidence at transcript level"/>
<protein>
    <recommendedName>
        <fullName evidence="1">eIF5-mimic protein 1</fullName>
    </recommendedName>
    <alternativeName>
        <fullName>Basic leucine zipper and W2 domain-containing protein 2</fullName>
    </alternativeName>
</protein>